<sequence>MDSSLAISGGPRLSNREWPRWPQPGDRALKSLEDVLTSGRWTISCAYQGRDSYERQFASAFADYCGSAMCVPISTGTASLAIALEACGVGAGDEVIVPGLSWVASASAVLGINAVPVLVDVDPATYCLDPAATEAAITERTRAITVVHAYSAVADLDALLDIARRHGLPLIEDCAHAHGAGFRGRPVGAHGAAGVFSMQGSKLLTCGEGGALVTDDADVALRAEHLRADGRVVRREPVGVGEMELEETGRMMGSNACLSEFHAAVLLDQLELLDGQNARRTRAADHLTDRLSELGMTAQATAPGTTARAYYRYLVRLPDEVLAVAPVERFAHALTAELGFAVTQTHRPLNDNPLNRPSSRRRFATDARYLERVDPSRFDLPAAKRAHESVVSFSHEVLLAPLDAIDDIARAFRKVLDNVREVSR</sequence>
<name>GLSA_STRGR</name>
<organism>
    <name type="scientific">Streptomyces griseus</name>
    <dbReference type="NCBI Taxonomy" id="1911"/>
    <lineage>
        <taxon>Bacteria</taxon>
        <taxon>Bacillati</taxon>
        <taxon>Actinomycetota</taxon>
        <taxon>Actinomycetes</taxon>
        <taxon>Kitasatosporales</taxon>
        <taxon>Streptomycetaceae</taxon>
        <taxon>Streptomyces</taxon>
    </lineage>
</organism>
<gene>
    <name type="primary">stsC</name>
    <name type="ORF">SG7F10.11c</name>
</gene>
<keyword id="KW-0032">Aminotransferase</keyword>
<keyword id="KW-0045">Antibiotic biosynthesis</keyword>
<keyword id="KW-0663">Pyridoxal phosphate</keyword>
<keyword id="KW-0808">Transferase</keyword>
<reference key="1">
    <citation type="journal article" date="1997" name="Arch. Microbiol.">
        <title>Identification of stsC, the gene encoding the L-glutamine:scyllo-inosose aminotransferase from streptomycin-producing Streptomycetes.</title>
        <authorList>
            <person name="Ahlert J."/>
            <person name="Distler J."/>
            <person name="Mansouri K."/>
            <person name="Piepersberg W."/>
        </authorList>
    </citation>
    <scope>NUCLEOTIDE SEQUENCE [GENOMIC DNA]</scope>
    <scope>FUNCTION</scope>
    <scope>CHARACTERIZATION</scope>
    <scope>COFACTOR</scope>
    <scope>SUBUNIT</scope>
    <source>
        <strain>N2-3-11</strain>
    </source>
</reference>
<reference key="2">
    <citation type="submission" date="2004-11" db="EMBL/GenBank/DDBJ databases">
        <title>Cloning and heterologous expression of the str/sts-gene cluster from a Streptomyces griseus DSM40236 PAC library: the cluster for streptomycin production lies in a highly conserved genomic area.</title>
        <authorList>
            <person name="van der Geize R."/>
            <person name="Dijkhuizen L."/>
            <person name="Wellington E.M."/>
            <person name="Piepersberg W."/>
        </authorList>
    </citation>
    <scope>NUCLEOTIDE SEQUENCE [GENOMIC DNA]</scope>
    <source>
        <strain>ATCC 23345 / DSM 40236 / JCM 4644 / NBRC 12875 / NCIMB 13023 / NRRL B-2682 / VKM Ac-800 / IMRU 3463</strain>
    </source>
</reference>
<feature type="chain" id="PRO_0000233018" description="L-glutamine:scyllo-inosose aminotransferase">
    <location>
        <begin position="1"/>
        <end position="424"/>
    </location>
</feature>
<feature type="region of interest" description="Disordered" evidence="2">
    <location>
        <begin position="1"/>
        <end position="21"/>
    </location>
</feature>
<feature type="modified residue" description="N6-(pyridoxal phosphate)lysine" evidence="1">
    <location>
        <position position="202"/>
    </location>
</feature>
<dbReference type="EC" id="2.6.1.50"/>
<dbReference type="EMBL" id="Y08763">
    <property type="protein sequence ID" value="CAA70012.1"/>
    <property type="molecule type" value="Genomic_DNA"/>
</dbReference>
<dbReference type="EMBL" id="AJ862840">
    <property type="protein sequence ID" value="CAH94315.1"/>
    <property type="molecule type" value="Genomic_DNA"/>
</dbReference>
<dbReference type="RefSeq" id="WP_003970228.1">
    <property type="nucleotide sequence ID" value="NZ_UAVD01000010.1"/>
</dbReference>
<dbReference type="SMR" id="P77952"/>
<dbReference type="OMA" id="YMAMFRV"/>
<dbReference type="OrthoDB" id="9804264at2"/>
<dbReference type="BioCyc" id="MetaCyc:MONOMER-14011"/>
<dbReference type="UniPathway" id="UPA00066"/>
<dbReference type="GO" id="GO:0047310">
    <property type="term" value="F:glutamine-scyllo-inositol transaminase activity"/>
    <property type="evidence" value="ECO:0007669"/>
    <property type="project" value="UniProtKB-EC"/>
</dbReference>
<dbReference type="GO" id="GO:0030170">
    <property type="term" value="F:pyridoxal phosphate binding"/>
    <property type="evidence" value="ECO:0007669"/>
    <property type="project" value="TreeGrafter"/>
</dbReference>
<dbReference type="GO" id="GO:0000271">
    <property type="term" value="P:polysaccharide biosynthetic process"/>
    <property type="evidence" value="ECO:0007669"/>
    <property type="project" value="TreeGrafter"/>
</dbReference>
<dbReference type="GO" id="GO:0019872">
    <property type="term" value="P:streptomycin biosynthetic process"/>
    <property type="evidence" value="ECO:0007669"/>
    <property type="project" value="UniProtKB-UniPathway"/>
</dbReference>
<dbReference type="CDD" id="cd00616">
    <property type="entry name" value="AHBA_syn"/>
    <property type="match status" value="1"/>
</dbReference>
<dbReference type="Gene3D" id="3.90.1150.10">
    <property type="entry name" value="Aspartate Aminotransferase, domain 1"/>
    <property type="match status" value="1"/>
</dbReference>
<dbReference type="Gene3D" id="3.40.640.10">
    <property type="entry name" value="Type I PLP-dependent aspartate aminotransferase-like (Major domain)"/>
    <property type="match status" value="1"/>
</dbReference>
<dbReference type="InterPro" id="IPR000653">
    <property type="entry name" value="DegT/StrS_aminotransferase"/>
</dbReference>
<dbReference type="InterPro" id="IPR015424">
    <property type="entry name" value="PyrdxlP-dep_Trfase"/>
</dbReference>
<dbReference type="InterPro" id="IPR015421">
    <property type="entry name" value="PyrdxlP-dep_Trfase_major"/>
</dbReference>
<dbReference type="InterPro" id="IPR015422">
    <property type="entry name" value="PyrdxlP-dep_Trfase_small"/>
</dbReference>
<dbReference type="PANTHER" id="PTHR30244:SF34">
    <property type="entry name" value="DTDP-4-AMINO-4,6-DIDEOXYGALACTOSE TRANSAMINASE"/>
    <property type="match status" value="1"/>
</dbReference>
<dbReference type="PANTHER" id="PTHR30244">
    <property type="entry name" value="TRANSAMINASE"/>
    <property type="match status" value="1"/>
</dbReference>
<dbReference type="Pfam" id="PF01041">
    <property type="entry name" value="DegT_DnrJ_EryC1"/>
    <property type="match status" value="1"/>
</dbReference>
<dbReference type="SUPFAM" id="SSF53383">
    <property type="entry name" value="PLP-dependent transferases"/>
    <property type="match status" value="1"/>
</dbReference>
<comment type="function">
    <text evidence="3">Catalyzes the PLP-dependent transamination of scyllo-inosose to form scyllo-inosamine.</text>
</comment>
<comment type="catalytic activity">
    <reaction>
        <text>scyllo-inosose + L-glutamine = 1-amino-1-deoxy-scyllo-inositol + 2-oxoglutaramate</text>
        <dbReference type="Rhea" id="RHEA:22920"/>
        <dbReference type="ChEBI" id="CHEBI:16769"/>
        <dbReference type="ChEBI" id="CHEBI:17811"/>
        <dbReference type="ChEBI" id="CHEBI:57671"/>
        <dbReference type="ChEBI" id="CHEBI:58359"/>
        <dbReference type="EC" id="2.6.1.50"/>
    </reaction>
</comment>
<comment type="cofactor">
    <cofactor evidence="3">
        <name>pyridoxal 5'-phosphate</name>
        <dbReference type="ChEBI" id="CHEBI:597326"/>
    </cofactor>
</comment>
<comment type="pathway">
    <text>Antibiotic biosynthesis; streptomycin biosynthesis.</text>
</comment>
<comment type="subunit">
    <text evidence="3">Homodimer.</text>
</comment>
<comment type="similarity">
    <text evidence="4">Belongs to the DegT/DnrJ/EryC1 family. L-glutamine:2-deoxy-scyllo-inosose/scyllo-inosose aminotransferase subfamily.</text>
</comment>
<evidence type="ECO:0000250" key="1"/>
<evidence type="ECO:0000256" key="2">
    <source>
        <dbReference type="SAM" id="MobiDB-lite"/>
    </source>
</evidence>
<evidence type="ECO:0000269" key="3">
    <source>
    </source>
</evidence>
<evidence type="ECO:0000305" key="4"/>
<proteinExistence type="evidence at protein level"/>
<accession>P77952</accession>
<accession>Q53IE1</accession>
<protein>
    <recommendedName>
        <fullName>L-glutamine:scyllo-inosose aminotransferase</fullName>
        <ecNumber>2.6.1.50</ecNumber>
    </recommendedName>
    <alternativeName>
        <fullName>Glutamine--scyllo-inositol transaminase</fullName>
    </alternativeName>
</protein>